<accession>A7IAL9</accession>
<dbReference type="EC" id="3.1.1.96" evidence="1"/>
<dbReference type="EMBL" id="CP000780">
    <property type="protein sequence ID" value="ABS56780.1"/>
    <property type="status" value="ALT_INIT"/>
    <property type="molecule type" value="Genomic_DNA"/>
</dbReference>
<dbReference type="RefSeq" id="WP_048068472.1">
    <property type="nucleotide sequence ID" value="NC_009712.1"/>
</dbReference>
<dbReference type="SMR" id="A7IAL9"/>
<dbReference type="STRING" id="456442.Mboo_2266"/>
<dbReference type="GeneID" id="5411083"/>
<dbReference type="KEGG" id="mbn:Mboo_2266"/>
<dbReference type="eggNOG" id="arCOG00501">
    <property type="taxonomic scope" value="Archaea"/>
</dbReference>
<dbReference type="eggNOG" id="arCOG01616">
    <property type="taxonomic scope" value="Archaea"/>
</dbReference>
<dbReference type="HOGENOM" id="CLU_610619_0_0_2"/>
<dbReference type="OrthoDB" id="9863at2157"/>
<dbReference type="Proteomes" id="UP000002408">
    <property type="component" value="Chromosome"/>
</dbReference>
<dbReference type="GO" id="GO:0051499">
    <property type="term" value="F:D-aminoacyl-tRNA deacylase activity"/>
    <property type="evidence" value="ECO:0007669"/>
    <property type="project" value="UniProtKB-UniRule"/>
</dbReference>
<dbReference type="GO" id="GO:0008270">
    <property type="term" value="F:zinc ion binding"/>
    <property type="evidence" value="ECO:0007669"/>
    <property type="project" value="UniProtKB-UniRule"/>
</dbReference>
<dbReference type="GO" id="GO:0019478">
    <property type="term" value="P:D-amino acid catabolic process"/>
    <property type="evidence" value="ECO:0007669"/>
    <property type="project" value="UniProtKB-UniRule"/>
</dbReference>
<dbReference type="Gene3D" id="3.40.50.10700">
    <property type="entry name" value="AF0625-like"/>
    <property type="match status" value="1"/>
</dbReference>
<dbReference type="Gene3D" id="3.40.630.50">
    <property type="entry name" value="AF0625-like"/>
    <property type="match status" value="1"/>
</dbReference>
<dbReference type="HAMAP" id="MF_00562">
    <property type="entry name" value="Deacylase_DtdA"/>
    <property type="match status" value="1"/>
</dbReference>
<dbReference type="InterPro" id="IPR018033">
    <property type="entry name" value="Deacylase_DtdA_archaea"/>
</dbReference>
<dbReference type="InterPro" id="IPR007508">
    <property type="entry name" value="DtdA"/>
</dbReference>
<dbReference type="NCBIfam" id="NF011436">
    <property type="entry name" value="PRK14866.1-3"/>
    <property type="match status" value="1"/>
</dbReference>
<dbReference type="PANTHER" id="PTHR34667">
    <property type="entry name" value="D-AMINOACYL-TRNA DEACYLASE"/>
    <property type="match status" value="1"/>
</dbReference>
<dbReference type="PANTHER" id="PTHR34667:SF1">
    <property type="entry name" value="D-AMINOACYL-TRNA DEACYLASE"/>
    <property type="match status" value="1"/>
</dbReference>
<dbReference type="Pfam" id="PF04414">
    <property type="entry name" value="tRNA_deacylase"/>
    <property type="match status" value="1"/>
</dbReference>
<dbReference type="SUPFAM" id="SSF142535">
    <property type="entry name" value="AF0625-like"/>
    <property type="match status" value="1"/>
</dbReference>
<name>DTDA_METB6</name>
<organism>
    <name type="scientific">Methanoregula boonei (strain DSM 21154 / JCM 14090 / 6A8)</name>
    <dbReference type="NCBI Taxonomy" id="456442"/>
    <lineage>
        <taxon>Archaea</taxon>
        <taxon>Methanobacteriati</taxon>
        <taxon>Methanobacteriota</taxon>
        <taxon>Stenosarchaea group</taxon>
        <taxon>Methanomicrobia</taxon>
        <taxon>Methanomicrobiales</taxon>
        <taxon>Methanoregulaceae</taxon>
        <taxon>Methanoregula</taxon>
    </lineage>
</organism>
<reference key="1">
    <citation type="journal article" date="2015" name="Microbiology">
        <title>Genome of Methanoregula boonei 6A8 reveals adaptations to oligotrophic peatland environments.</title>
        <authorList>
            <person name="Braeuer S."/>
            <person name="Cadillo-Quiroz H."/>
            <person name="Kyrpides N."/>
            <person name="Woyke T."/>
            <person name="Goodwin L."/>
            <person name="Detter C."/>
            <person name="Podell S."/>
            <person name="Yavitt J.B."/>
            <person name="Zinder S.H."/>
        </authorList>
    </citation>
    <scope>NUCLEOTIDE SEQUENCE [LARGE SCALE GENOMIC DNA]</scope>
    <source>
        <strain>DSM 21154 / JCM 14090 / 6A8</strain>
    </source>
</reference>
<proteinExistence type="inferred from homology"/>
<gene>
    <name evidence="1" type="primary">dtdA</name>
    <name type="ordered locus">Mboo_2266</name>
</gene>
<protein>
    <recommendedName>
        <fullName evidence="1">D-aminoacyl-tRNA deacylase</fullName>
        <ecNumber evidence="1">3.1.1.96</ecNumber>
    </recommendedName>
    <alternativeName>
        <fullName>D-tyrosyl-tRNA(Tyr) deacylase</fullName>
    </alternativeName>
</protein>
<feature type="chain" id="PRO_0000345221" description="D-aminoacyl-tRNA deacylase">
    <location>
        <begin position="1"/>
        <end position="436"/>
    </location>
</feature>
<keyword id="KW-0378">Hydrolase</keyword>
<keyword id="KW-0479">Metal-binding</keyword>
<keyword id="KW-1185">Reference proteome</keyword>
<keyword id="KW-0862">Zinc</keyword>
<evidence type="ECO:0000255" key="1">
    <source>
        <dbReference type="HAMAP-Rule" id="MF_00562"/>
    </source>
</evidence>
<evidence type="ECO:0000305" key="2"/>
<sequence>MKVALIHSRDDVAGCTIRRHIEQCLDDAHGSANGRTYEFVEVGGRLINAEGVDATLDVNLVIFLSRHSSVNPVPVLTVHATGNFGAAELGGSPRTLAPAAPAMMQATLRALARYCPEGYRVSYEVTHHGPTGLSHPSFFVEIGSTEKEWVDPVAGRAVAEAVLGADPAGAVPLIGIGGTHYAPRETAIALSSRGAFGHIASSRLQVALLDRELVQAMVVQSRAVAAYIDRKAVLPGDVSRISAILDELGIPRLSETEITSLGHLAWEAYREVRALAATVGPQTRCFIHALEGTGPLVLVSLDPVLLSEAKRCDESALVQRFGPLPVAHLATEDNVLLPQFVAFERNSSKIINDLNTLCVKIIRNRESTATENDYLVIRKVRFDPQKARELGVPAGPAYRQLAAGQAVEYDGQIITPDRVSVATETRIHIPGLENYS</sequence>
<comment type="function">
    <text evidence="1">D-aminoacyl-tRNA deacylase with broad substrate specificity. By recycling D-aminoacyl-tRNA to D-amino acids and free tRNA molecules, this enzyme counteracts the toxicity associated with the formation of D-aminoacyl-tRNA entities in vivo.</text>
</comment>
<comment type="catalytic activity">
    <reaction evidence="1">
        <text>a D-aminoacyl-tRNA + H2O = a tRNA + a D-alpha-amino acid + H(+)</text>
        <dbReference type="Rhea" id="RHEA:13953"/>
        <dbReference type="Rhea" id="RHEA-COMP:10123"/>
        <dbReference type="Rhea" id="RHEA-COMP:10124"/>
        <dbReference type="ChEBI" id="CHEBI:15377"/>
        <dbReference type="ChEBI" id="CHEBI:15378"/>
        <dbReference type="ChEBI" id="CHEBI:59871"/>
        <dbReference type="ChEBI" id="CHEBI:78442"/>
        <dbReference type="ChEBI" id="CHEBI:79333"/>
        <dbReference type="EC" id="3.1.1.96"/>
    </reaction>
</comment>
<comment type="catalytic activity">
    <reaction evidence="1">
        <text>glycyl-tRNA(Ala) + H2O = tRNA(Ala) + glycine + H(+)</text>
        <dbReference type="Rhea" id="RHEA:53744"/>
        <dbReference type="Rhea" id="RHEA-COMP:9657"/>
        <dbReference type="Rhea" id="RHEA-COMP:13640"/>
        <dbReference type="ChEBI" id="CHEBI:15377"/>
        <dbReference type="ChEBI" id="CHEBI:15378"/>
        <dbReference type="ChEBI" id="CHEBI:57305"/>
        <dbReference type="ChEBI" id="CHEBI:78442"/>
        <dbReference type="ChEBI" id="CHEBI:78522"/>
        <dbReference type="EC" id="3.1.1.96"/>
    </reaction>
</comment>
<comment type="cofactor">
    <cofactor evidence="1">
        <name>Zn(2+)</name>
        <dbReference type="ChEBI" id="CHEBI:29105"/>
    </cofactor>
    <text evidence="1">Binds 2 Zn(2+) ions per subunit.</text>
</comment>
<comment type="subunit">
    <text evidence="1">Monomer.</text>
</comment>
<comment type="similarity">
    <text evidence="1">Belongs to the DtdA deacylase family.</text>
</comment>
<comment type="sequence caution" evidence="2">
    <conflict type="erroneous initiation">
        <sequence resource="EMBL-CDS" id="ABS56780"/>
    </conflict>
    <text>Extended N-terminus.</text>
</comment>